<comment type="function">
    <text evidence="1">Induces relaxation of rat smooth muscle from tail artery and contraction of that from ileum, urinary bladder and uterus. Binds to both bradykinin receptor B1 (BDKRB1) and B2 (BDKRB2).</text>
</comment>
<comment type="subcellular location">
    <subcellularLocation>
        <location evidence="4">Secreted</location>
    </subcellularLocation>
</comment>
<comment type="tissue specificity">
    <text evidence="7">Expressed by the skin glands.</text>
</comment>
<comment type="similarity">
    <text evidence="6">Belongs to the frog skin active peptide (FSAP) family. Bradykinin-related peptide subfamily.</text>
</comment>
<accession>A0A5Q0MUM5</accession>
<protein>
    <recommendedName>
        <fullName evidence="5">[Ser6, Val10, Asp11]-phyllokinin</fullName>
    </recommendedName>
</protein>
<dbReference type="EMBL" id="MK766838">
    <property type="protein sequence ID" value="QFZ95564.1"/>
    <property type="molecule type" value="mRNA"/>
</dbReference>
<dbReference type="GO" id="GO:0005576">
    <property type="term" value="C:extracellular region"/>
    <property type="evidence" value="ECO:0007669"/>
    <property type="project" value="UniProtKB-SubCell"/>
</dbReference>
<dbReference type="GO" id="GO:0090729">
    <property type="term" value="F:toxin activity"/>
    <property type="evidence" value="ECO:0007669"/>
    <property type="project" value="UniProtKB-KW"/>
</dbReference>
<dbReference type="GO" id="GO:0042311">
    <property type="term" value="P:vasodilation"/>
    <property type="evidence" value="ECO:0007669"/>
    <property type="project" value="UniProtKB-KW"/>
</dbReference>
<dbReference type="InterPro" id="IPR004275">
    <property type="entry name" value="Frog_antimicrobial_propeptide"/>
</dbReference>
<dbReference type="Pfam" id="PF03032">
    <property type="entry name" value="FSAP_sig_propep"/>
    <property type="match status" value="1"/>
</dbReference>
<keyword id="KW-0165">Cleavage on pair of basic residues</keyword>
<keyword id="KW-1213">G-protein coupled receptor impairing toxin</keyword>
<keyword id="KW-0964">Secreted</keyword>
<keyword id="KW-0732">Signal</keyword>
<keyword id="KW-0800">Toxin</keyword>
<keyword id="KW-0838">Vasoactive</keyword>
<keyword id="KW-0840">Vasodilator</keyword>
<sequence length="62" mass="7298">MSFLKKSLLLVLFLGLVSFSICEEEKRETEEEENEDDMDEESEEKKRESPDRPPGFSPFRVD</sequence>
<organism>
    <name type="scientific">Agalychnis spurrelli</name>
    <name type="common">Gliding leaf frog</name>
    <name type="synonym">Agalychnis litodryas</name>
    <dbReference type="NCBI Taxonomy" id="317303"/>
    <lineage>
        <taxon>Eukaryota</taxon>
        <taxon>Metazoa</taxon>
        <taxon>Chordata</taxon>
        <taxon>Craniata</taxon>
        <taxon>Vertebrata</taxon>
        <taxon>Euteleostomi</taxon>
        <taxon>Amphibia</taxon>
        <taxon>Batrachia</taxon>
        <taxon>Anura</taxon>
        <taxon>Neobatrachia</taxon>
        <taxon>Hyloidea</taxon>
        <taxon>Hylidae</taxon>
        <taxon>Phyllomedusinae</taxon>
        <taxon>Agalychnis</taxon>
    </lineage>
</organism>
<evidence type="ECO:0000250" key="1">
    <source>
        <dbReference type="UniProtKB" id="L0PIN3"/>
    </source>
</evidence>
<evidence type="ECO:0000255" key="2"/>
<evidence type="ECO:0000256" key="3">
    <source>
        <dbReference type="SAM" id="MobiDB-lite"/>
    </source>
</evidence>
<evidence type="ECO:0000269" key="4">
    <source>
    </source>
</evidence>
<evidence type="ECO:0000303" key="5">
    <source>
    </source>
</evidence>
<evidence type="ECO:0000305" key="6"/>
<evidence type="ECO:0000305" key="7">
    <source>
    </source>
</evidence>
<reference key="1">
    <citation type="journal article" date="2019" name="Biomolecules">
        <title>Unravelling the skin secretion peptides of the gliding leaf frog, Agalychnis spurrelli (Hylidae).</title>
        <authorList>
            <person name="Proano-Bolanos C."/>
            <person name="Blasco-Zuniga A."/>
            <person name="Almeida J.R."/>
            <person name="Wang L."/>
            <person name="Llumiquinga M.A."/>
            <person name="Rivera M."/>
            <person name="Zhou M."/>
            <person name="Chen T."/>
            <person name="Shaw C."/>
        </authorList>
    </citation>
    <scope>NUCLEOTIDE SEQUENCE [MRNA]</scope>
    <scope>IDENTIFICATION BY MASS SPECTROMETRY</scope>
    <scope>SUBCELLULAR LOCATION</scope>
    <source>
        <tissue>Skin secretion</tissue>
    </source>
</reference>
<feature type="signal peptide" evidence="2">
    <location>
        <begin position="1"/>
        <end position="22"/>
    </location>
</feature>
<feature type="propeptide" id="PRO_0000449975" evidence="7">
    <location>
        <begin position="23"/>
        <end position="51"/>
    </location>
</feature>
<feature type="peptide" id="PRO_0000449976" description="[Ser6, Val10, Asp11]-phyllokinin" evidence="7">
    <location>
        <begin position="52"/>
        <end position="62"/>
    </location>
</feature>
<feature type="region of interest" description="Disordered" evidence="3">
    <location>
        <begin position="24"/>
        <end position="62"/>
    </location>
</feature>
<feature type="compositionally biased region" description="Acidic residues" evidence="3">
    <location>
        <begin position="30"/>
        <end position="42"/>
    </location>
</feature>
<name>BRKPS_AGASP</name>
<proteinExistence type="evidence at protein level"/>